<comment type="function">
    <text>Has lytic activity against M.lysodeikticus, V.alginolyticus from Epinephelus fario, V.vulnificus from culture water, A.hydrophila from soft-shell turtle, A.hydrophila from goldfish and V.parahaemolyticus, P.fluorescens and V.fluvialis from culture water.</text>
</comment>
<comment type="catalytic activity">
    <reaction>
        <text>Hydrolysis of (1-&gt;4)-beta-linkages between N-acetylmuramic acid and N-acetyl-D-glucosamine residues in a peptidoglycan and between N-acetyl-D-glucosamine residues in chitodextrins.</text>
        <dbReference type="EC" id="3.2.1.17"/>
    </reaction>
</comment>
<comment type="tissue specificity">
    <text evidence="2">Expressed in intestine, liver, spleen, anterior kidney, posterior kidney, heart, gill, muscle and leukocytes.</text>
</comment>
<comment type="similarity">
    <text evidence="3">Belongs to the glycosyl hydrolase 23 family.</text>
</comment>
<sequence length="194" mass="21179">MGYGNIMNVETTGASWQTAQQDKLGYSGVRASHTMANTDSGRMERYRSKINSVGAKYGIDPALIAAIISEESRAGNVLHDGWGDYDSNRGAYNAWGLMQVDVNPNGGGHTARGAWDSEEHLSQGAEILVYFIGRIRNKFPGWNTEQQLKGGIAAYNMGDGNVHSYDNVDGRTTGGDYSNDVVARAQWYKTQKGF</sequence>
<organism>
    <name type="scientific">Epinephelus coioides</name>
    <name type="common">Orange-spotted grouper</name>
    <name type="synonym">Epinephelus nebulosus</name>
    <dbReference type="NCBI Taxonomy" id="94232"/>
    <lineage>
        <taxon>Eukaryota</taxon>
        <taxon>Metazoa</taxon>
        <taxon>Chordata</taxon>
        <taxon>Craniata</taxon>
        <taxon>Vertebrata</taxon>
        <taxon>Euteleostomi</taxon>
        <taxon>Actinopterygii</taxon>
        <taxon>Neopterygii</taxon>
        <taxon>Teleostei</taxon>
        <taxon>Neoteleostei</taxon>
        <taxon>Acanthomorphata</taxon>
        <taxon>Eupercaria</taxon>
        <taxon>Perciformes</taxon>
        <taxon>Serranoidei</taxon>
        <taxon>Serranidae</taxon>
        <taxon>Epinephelinae</taxon>
        <taxon>Epinephelini</taxon>
        <taxon>Epinephelus</taxon>
    </lineage>
</organism>
<keyword id="KW-0929">Antimicrobial</keyword>
<keyword id="KW-0081">Bacteriolytic enzyme</keyword>
<keyword id="KW-0326">Glycosidase</keyword>
<keyword id="KW-0378">Hydrolase</keyword>
<name>LYG_EPICO</name>
<proteinExistence type="evidence at protein level"/>
<reference key="1">
    <citation type="journal article" date="2003" name="Dis. Aquat. Organ.">
        <title>Molecular cloning, expression of orange-spotted grouper goose-type lysozyme cDNA, and lytic activity of its recombinant protein.</title>
        <authorList>
            <person name="Yin Z.X."/>
            <person name="He J.G."/>
            <person name="Deng W.X."/>
            <person name="Chan S.M."/>
        </authorList>
    </citation>
    <scope>NUCLEOTIDE SEQUENCE [MRNA]</scope>
    <scope>CHARACTERIZATION</scope>
    <scope>TISSUE SPECIFICITY</scope>
</reference>
<evidence type="ECO:0000250" key="1"/>
<evidence type="ECO:0000269" key="2">
    <source>
    </source>
</evidence>
<evidence type="ECO:0000305" key="3"/>
<feature type="chain" id="PRO_0000193518" description="Lysozyme g">
    <location>
        <begin position="1"/>
        <end position="194"/>
    </location>
</feature>
<feature type="active site" evidence="1">
    <location>
        <position position="71"/>
    </location>
</feature>
<feature type="active site" evidence="1">
    <location>
        <position position="84"/>
    </location>
</feature>
<accession>Q90X99</accession>
<protein>
    <recommendedName>
        <fullName>Lysozyme g</fullName>
        <ecNumber>3.2.1.17</ecNumber>
    </recommendedName>
    <alternativeName>
        <fullName>1,4-beta-N-acetylmuramidase</fullName>
    </alternativeName>
</protein>
<dbReference type="EC" id="3.2.1.17"/>
<dbReference type="EMBL" id="AF416458">
    <property type="protein sequence ID" value="AAL08021.2"/>
    <property type="molecule type" value="mRNA"/>
</dbReference>
<dbReference type="SMR" id="Q90X99"/>
<dbReference type="CAZy" id="GH23">
    <property type="family name" value="Glycoside Hydrolase Family 23"/>
</dbReference>
<dbReference type="GO" id="GO:0005576">
    <property type="term" value="C:extracellular region"/>
    <property type="evidence" value="ECO:0007669"/>
    <property type="project" value="TreeGrafter"/>
</dbReference>
<dbReference type="GO" id="GO:0003796">
    <property type="term" value="F:lysozyme activity"/>
    <property type="evidence" value="ECO:0007669"/>
    <property type="project" value="UniProtKB-EC"/>
</dbReference>
<dbReference type="GO" id="GO:0050830">
    <property type="term" value="P:defense response to Gram-positive bacterium"/>
    <property type="evidence" value="ECO:0007669"/>
    <property type="project" value="TreeGrafter"/>
</dbReference>
<dbReference type="GO" id="GO:0031640">
    <property type="term" value="P:killing of cells of another organism"/>
    <property type="evidence" value="ECO:0007669"/>
    <property type="project" value="UniProtKB-KW"/>
</dbReference>
<dbReference type="GO" id="GO:0009253">
    <property type="term" value="P:peptidoglycan catabolic process"/>
    <property type="evidence" value="ECO:0007669"/>
    <property type="project" value="InterPro"/>
</dbReference>
<dbReference type="CDD" id="cd01021">
    <property type="entry name" value="GEWL"/>
    <property type="match status" value="1"/>
</dbReference>
<dbReference type="FunFam" id="1.10.530.10:FF:000026">
    <property type="entry name" value="Lysozyme g"/>
    <property type="match status" value="1"/>
</dbReference>
<dbReference type="Gene3D" id="1.10.530.10">
    <property type="match status" value="1"/>
</dbReference>
<dbReference type="InterPro" id="IPR002152">
    <property type="entry name" value="Glyco_hydro_23"/>
</dbReference>
<dbReference type="InterPro" id="IPR023346">
    <property type="entry name" value="Lysozyme-like_dom_sf"/>
</dbReference>
<dbReference type="InterPro" id="IPR008258">
    <property type="entry name" value="Transglycosylase_SLT_dom_1"/>
</dbReference>
<dbReference type="PANTHER" id="PTHR31698">
    <property type="entry name" value="LYSOZYME G FAMILY MEMBER"/>
    <property type="match status" value="1"/>
</dbReference>
<dbReference type="PANTHER" id="PTHR31698:SF8">
    <property type="entry name" value="LYSOZYME G-RELATED"/>
    <property type="match status" value="1"/>
</dbReference>
<dbReference type="Pfam" id="PF01464">
    <property type="entry name" value="SLT"/>
    <property type="match status" value="1"/>
</dbReference>
<dbReference type="PIRSF" id="PIRSF001065">
    <property type="entry name" value="Lysozyme_g"/>
    <property type="match status" value="1"/>
</dbReference>
<dbReference type="PRINTS" id="PR00749">
    <property type="entry name" value="LYSOZYMEG"/>
</dbReference>
<dbReference type="SUPFAM" id="SSF53955">
    <property type="entry name" value="Lysozyme-like"/>
    <property type="match status" value="1"/>
</dbReference>